<gene>
    <name evidence="1" type="primary">rpsG</name>
    <name type="ordered locus">A1G_00995</name>
</gene>
<organism>
    <name type="scientific">Rickettsia rickettsii (strain Sheila Smith)</name>
    <dbReference type="NCBI Taxonomy" id="392021"/>
    <lineage>
        <taxon>Bacteria</taxon>
        <taxon>Pseudomonadati</taxon>
        <taxon>Pseudomonadota</taxon>
        <taxon>Alphaproteobacteria</taxon>
        <taxon>Rickettsiales</taxon>
        <taxon>Rickettsiaceae</taxon>
        <taxon>Rickettsieae</taxon>
        <taxon>Rickettsia</taxon>
        <taxon>spotted fever group</taxon>
    </lineage>
</organism>
<proteinExistence type="inferred from homology"/>
<evidence type="ECO:0000255" key="1">
    <source>
        <dbReference type="HAMAP-Rule" id="MF_00480"/>
    </source>
</evidence>
<evidence type="ECO:0000305" key="2"/>
<sequence length="160" mass="18412">MSRRHAAEKRVILPDMKYNSILLSRFINNIMKEGKKALAEKIVYSAFNKIEKKHRVDPYQAFNNAMHNVKPHLEVTSVRVGGANYQVPTHVDERRGYALASRWIINAASKRSEKMMIDKLAEELFEASNNRGVAIKKKEDTHKMAEANKAFSHFSPKKMK</sequence>
<reference key="1">
    <citation type="submission" date="2007-09" db="EMBL/GenBank/DDBJ databases">
        <title>Complete genome sequence of Rickettsia rickettsii.</title>
        <authorList>
            <person name="Madan A."/>
            <person name="Fahey J."/>
            <person name="Helton E."/>
            <person name="Ketteman M."/>
            <person name="Madan A."/>
            <person name="Rodrigues S."/>
            <person name="Sanchez A."/>
            <person name="Dasch G."/>
            <person name="Eremeeva M."/>
        </authorList>
    </citation>
    <scope>NUCLEOTIDE SEQUENCE [LARGE SCALE GENOMIC DNA]</scope>
    <source>
        <strain>Sheila Smith</strain>
    </source>
</reference>
<keyword id="KW-0687">Ribonucleoprotein</keyword>
<keyword id="KW-0689">Ribosomal protein</keyword>
<keyword id="KW-0694">RNA-binding</keyword>
<keyword id="KW-0699">rRNA-binding</keyword>
<keyword id="KW-0820">tRNA-binding</keyword>
<protein>
    <recommendedName>
        <fullName evidence="1">Small ribosomal subunit protein uS7</fullName>
    </recommendedName>
    <alternativeName>
        <fullName evidence="2">30S ribosomal protein S7</fullName>
    </alternativeName>
</protein>
<comment type="function">
    <text evidence="1">One of the primary rRNA binding proteins, it binds directly to 16S rRNA where it nucleates assembly of the head domain of the 30S subunit. Is located at the subunit interface close to the decoding center, probably blocks exit of the E-site tRNA.</text>
</comment>
<comment type="subunit">
    <text evidence="1">Part of the 30S ribosomal subunit. Contacts proteins S9 and S11.</text>
</comment>
<comment type="similarity">
    <text evidence="1">Belongs to the universal ribosomal protein uS7 family.</text>
</comment>
<feature type="chain" id="PRO_1000014276" description="Small ribosomal subunit protein uS7">
    <location>
        <begin position="1"/>
        <end position="160"/>
    </location>
</feature>
<name>RS7_RICRS</name>
<dbReference type="EMBL" id="CP000848">
    <property type="protein sequence ID" value="ABV75781.1"/>
    <property type="molecule type" value="Genomic_DNA"/>
</dbReference>
<dbReference type="RefSeq" id="WP_012150390.1">
    <property type="nucleotide sequence ID" value="NZ_CP121767.1"/>
</dbReference>
<dbReference type="SMR" id="A8GQV6"/>
<dbReference type="GeneID" id="79936965"/>
<dbReference type="KEGG" id="rri:A1G_00995"/>
<dbReference type="HOGENOM" id="CLU_072226_1_1_5"/>
<dbReference type="Proteomes" id="UP000006832">
    <property type="component" value="Chromosome"/>
</dbReference>
<dbReference type="GO" id="GO:0015935">
    <property type="term" value="C:small ribosomal subunit"/>
    <property type="evidence" value="ECO:0007669"/>
    <property type="project" value="InterPro"/>
</dbReference>
<dbReference type="GO" id="GO:0019843">
    <property type="term" value="F:rRNA binding"/>
    <property type="evidence" value="ECO:0007669"/>
    <property type="project" value="UniProtKB-UniRule"/>
</dbReference>
<dbReference type="GO" id="GO:0003735">
    <property type="term" value="F:structural constituent of ribosome"/>
    <property type="evidence" value="ECO:0007669"/>
    <property type="project" value="InterPro"/>
</dbReference>
<dbReference type="GO" id="GO:0000049">
    <property type="term" value="F:tRNA binding"/>
    <property type="evidence" value="ECO:0007669"/>
    <property type="project" value="UniProtKB-UniRule"/>
</dbReference>
<dbReference type="GO" id="GO:0006412">
    <property type="term" value="P:translation"/>
    <property type="evidence" value="ECO:0007669"/>
    <property type="project" value="UniProtKB-UniRule"/>
</dbReference>
<dbReference type="CDD" id="cd14869">
    <property type="entry name" value="uS7_Bacteria"/>
    <property type="match status" value="1"/>
</dbReference>
<dbReference type="FunFam" id="1.10.455.10:FF:000001">
    <property type="entry name" value="30S ribosomal protein S7"/>
    <property type="match status" value="1"/>
</dbReference>
<dbReference type="Gene3D" id="1.10.455.10">
    <property type="entry name" value="Ribosomal protein S7 domain"/>
    <property type="match status" value="1"/>
</dbReference>
<dbReference type="HAMAP" id="MF_00480_B">
    <property type="entry name" value="Ribosomal_uS7_B"/>
    <property type="match status" value="1"/>
</dbReference>
<dbReference type="InterPro" id="IPR000235">
    <property type="entry name" value="Ribosomal_uS7"/>
</dbReference>
<dbReference type="InterPro" id="IPR005717">
    <property type="entry name" value="Ribosomal_uS7_bac/org-type"/>
</dbReference>
<dbReference type="InterPro" id="IPR020606">
    <property type="entry name" value="Ribosomal_uS7_CS"/>
</dbReference>
<dbReference type="InterPro" id="IPR023798">
    <property type="entry name" value="Ribosomal_uS7_dom"/>
</dbReference>
<dbReference type="InterPro" id="IPR036823">
    <property type="entry name" value="Ribosomal_uS7_dom_sf"/>
</dbReference>
<dbReference type="NCBIfam" id="TIGR01029">
    <property type="entry name" value="rpsG_bact"/>
    <property type="match status" value="1"/>
</dbReference>
<dbReference type="PANTHER" id="PTHR11205">
    <property type="entry name" value="RIBOSOMAL PROTEIN S7"/>
    <property type="match status" value="1"/>
</dbReference>
<dbReference type="Pfam" id="PF00177">
    <property type="entry name" value="Ribosomal_S7"/>
    <property type="match status" value="1"/>
</dbReference>
<dbReference type="PIRSF" id="PIRSF002122">
    <property type="entry name" value="RPS7p_RPS7a_RPS5e_RPS7o"/>
    <property type="match status" value="1"/>
</dbReference>
<dbReference type="SUPFAM" id="SSF47973">
    <property type="entry name" value="Ribosomal protein S7"/>
    <property type="match status" value="1"/>
</dbReference>
<dbReference type="PROSITE" id="PS00052">
    <property type="entry name" value="RIBOSOMAL_S7"/>
    <property type="match status" value="1"/>
</dbReference>
<accession>A8GQV6</accession>